<evidence type="ECO:0000250" key="1">
    <source>
        <dbReference type="UniProtKB" id="A4Q9E8"/>
    </source>
</evidence>
<evidence type="ECO:0000255" key="2">
    <source>
        <dbReference type="PROSITE-ProRule" id="PRU00568"/>
    </source>
</evidence>
<evidence type="ECO:0000256" key="3">
    <source>
        <dbReference type="SAM" id="MobiDB-lite"/>
    </source>
</evidence>
<evidence type="ECO:0000269" key="4">
    <source>
    </source>
</evidence>
<evidence type="ECO:0000269" key="5">
    <source>
    </source>
</evidence>
<evidence type="ECO:0000269" key="6">
    <source>
    </source>
</evidence>
<evidence type="ECO:0000303" key="7">
    <source>
    </source>
</evidence>
<evidence type="ECO:0000303" key="8">
    <source>
    </source>
</evidence>
<evidence type="ECO:0000305" key="9"/>
<evidence type="ECO:0000305" key="10">
    <source>
    </source>
</evidence>
<evidence type="ECO:0000305" key="11">
    <source>
    </source>
</evidence>
<evidence type="ECO:0000312" key="12">
    <source>
        <dbReference type="MGI" id="MGI:1913589"/>
    </source>
</evidence>
<feature type="chain" id="PRO_0000324518" description="Probable tubulin polyglutamylase TTLL9">
    <location>
        <begin position="1"/>
        <end position="461"/>
    </location>
</feature>
<feature type="domain" description="TTL" evidence="2">
    <location>
        <begin position="22"/>
        <end position="402"/>
    </location>
</feature>
<feature type="region of interest" description="Disordered" evidence="3">
    <location>
        <begin position="1"/>
        <end position="20"/>
    </location>
</feature>
<feature type="region of interest" description="Disordered" evidence="3">
    <location>
        <begin position="172"/>
        <end position="208"/>
    </location>
</feature>
<feature type="compositionally biased region" description="Polar residues" evidence="3">
    <location>
        <begin position="1"/>
        <end position="10"/>
    </location>
</feature>
<feature type="compositionally biased region" description="Basic and acidic residues" evidence="3">
    <location>
        <begin position="198"/>
        <end position="208"/>
    </location>
</feature>
<feature type="binding site" evidence="1">
    <location>
        <position position="149"/>
    </location>
    <ligand>
        <name>ATP</name>
        <dbReference type="ChEBI" id="CHEBI:30616"/>
    </ligand>
</feature>
<feature type="binding site" evidence="1">
    <location>
        <begin position="155"/>
        <end position="156"/>
    </location>
    <ligand>
        <name>ATP</name>
        <dbReference type="ChEBI" id="CHEBI:30616"/>
    </ligand>
</feature>
<feature type="binding site" evidence="1">
    <location>
        <position position="155"/>
    </location>
    <ligand>
        <name>a protein</name>
        <dbReference type="ChEBI" id="CHEBI:16541"/>
    </ligand>
    <ligandPart>
        <name>L-glutamate residue</name>
        <dbReference type="ChEBI" id="CHEBI:29973"/>
        <note>L-glutamate acceptor residue in protein target</note>
    </ligandPart>
</feature>
<feature type="binding site" evidence="1">
    <location>
        <begin position="218"/>
        <end position="221"/>
    </location>
    <ligand>
        <name>ATP</name>
        <dbReference type="ChEBI" id="CHEBI:30616"/>
    </ligand>
</feature>
<feature type="binding site" evidence="1">
    <location>
        <begin position="231"/>
        <end position="233"/>
    </location>
    <ligand>
        <name>ATP</name>
        <dbReference type="ChEBI" id="CHEBI:30616"/>
    </ligand>
</feature>
<feature type="binding site" evidence="1">
    <location>
        <position position="257"/>
    </location>
    <ligand>
        <name>L-glutamate</name>
        <dbReference type="ChEBI" id="CHEBI:29985"/>
    </ligand>
</feature>
<feature type="binding site" evidence="1">
    <location>
        <begin position="276"/>
        <end position="277"/>
    </location>
    <ligand>
        <name>ATP</name>
        <dbReference type="ChEBI" id="CHEBI:30616"/>
    </ligand>
</feature>
<feature type="binding site" evidence="1">
    <location>
        <position position="294"/>
    </location>
    <ligand>
        <name>L-glutamate</name>
        <dbReference type="ChEBI" id="CHEBI:29985"/>
    </ligand>
</feature>
<feature type="binding site" evidence="1">
    <location>
        <position position="348"/>
    </location>
    <ligand>
        <name>Mg(2+)</name>
        <dbReference type="ChEBI" id="CHEBI:18420"/>
        <label>1</label>
    </ligand>
</feature>
<feature type="binding site" evidence="1">
    <location>
        <position position="361"/>
    </location>
    <ligand>
        <name>Mg(2+)</name>
        <dbReference type="ChEBI" id="CHEBI:18420"/>
        <label>1</label>
    </ligand>
</feature>
<feature type="binding site" evidence="1">
    <location>
        <position position="361"/>
    </location>
    <ligand>
        <name>Mg(2+)</name>
        <dbReference type="ChEBI" id="CHEBI:18420"/>
        <label>2</label>
    </ligand>
</feature>
<feature type="binding site" evidence="1">
    <location>
        <position position="363"/>
    </location>
    <ligand>
        <name>Mg(2+)</name>
        <dbReference type="ChEBI" id="CHEBI:18420"/>
        <label>2</label>
    </ligand>
</feature>
<feature type="binding site" evidence="1">
    <location>
        <position position="379"/>
    </location>
    <ligand>
        <name>L-glutamate</name>
        <dbReference type="ChEBI" id="CHEBI:29985"/>
    </ligand>
</feature>
<feature type="site" description="Essential for specifying alpha-elongation versus initiation step of the polyglutamylase activity" evidence="1">
    <location>
        <position position="155"/>
    </location>
</feature>
<feature type="splice variant" id="VSP_032261" description="In isoform 2." evidence="7">
    <original>CVNDRKEQLRQLFRSLQAQRKAPS</original>
    <variation>TLSQTGSEWERNIIGSGGGLGPLGRAV</variation>
    <location>
        <begin position="438"/>
        <end position="461"/>
    </location>
</feature>
<feature type="sequence conflict" description="In Ref. 2; BAB29950." evidence="9" ref="2">
    <original>F</original>
    <variation>L</variation>
    <location>
        <position position="162"/>
    </location>
</feature>
<proteinExistence type="evidence at protein level"/>
<dbReference type="EC" id="6.3.2.-" evidence="11"/>
<dbReference type="EMBL" id="AM690753">
    <property type="protein sequence ID" value="CAM84330.1"/>
    <property type="molecule type" value="mRNA"/>
</dbReference>
<dbReference type="EMBL" id="AK015740">
    <property type="protein sequence ID" value="BAB29950.1"/>
    <property type="molecule type" value="mRNA"/>
</dbReference>
<dbReference type="EMBL" id="AL833801">
    <property type="protein sequence ID" value="CAM23682.1"/>
    <property type="molecule type" value="Genomic_DNA"/>
</dbReference>
<dbReference type="EMBL" id="AL928862">
    <property type="protein sequence ID" value="CAM23682.1"/>
    <property type="status" value="JOINED"/>
    <property type="molecule type" value="Genomic_DNA"/>
</dbReference>
<dbReference type="EMBL" id="AL833801">
    <property type="protein sequence ID" value="CAM23683.1"/>
    <property type="molecule type" value="Genomic_DNA"/>
</dbReference>
<dbReference type="EMBL" id="AL928862">
    <property type="protein sequence ID" value="CAM23683.1"/>
    <property type="status" value="JOINED"/>
    <property type="molecule type" value="Genomic_DNA"/>
</dbReference>
<dbReference type="EMBL" id="AL833801">
    <property type="protein sequence ID" value="CAM23684.1"/>
    <property type="status" value="ALT_SEQ"/>
    <property type="molecule type" value="Genomic_DNA"/>
</dbReference>
<dbReference type="EMBL" id="AL833801">
    <property type="protein sequence ID" value="CAM23685.1"/>
    <property type="status" value="ALT_SEQ"/>
    <property type="molecule type" value="Genomic_DNA"/>
</dbReference>
<dbReference type="EMBL" id="AL928862">
    <property type="protein sequence ID" value="CAM27198.1"/>
    <property type="molecule type" value="Genomic_DNA"/>
</dbReference>
<dbReference type="EMBL" id="AL833801">
    <property type="protein sequence ID" value="CAM27198.1"/>
    <property type="status" value="JOINED"/>
    <property type="molecule type" value="Genomic_DNA"/>
</dbReference>
<dbReference type="EMBL" id="AL928862">
    <property type="protein sequence ID" value="CAM27199.1"/>
    <property type="molecule type" value="Genomic_DNA"/>
</dbReference>
<dbReference type="EMBL" id="AL833801">
    <property type="protein sequence ID" value="CAM27199.1"/>
    <property type="status" value="JOINED"/>
    <property type="molecule type" value="Genomic_DNA"/>
</dbReference>
<dbReference type="CCDS" id="CCDS16903.1">
    <molecule id="A2APC3-2"/>
</dbReference>
<dbReference type="CCDS" id="CCDS38283.1">
    <molecule id="A2APC3-1"/>
</dbReference>
<dbReference type="RefSeq" id="NP_001077087.1">
    <molecule id="A2APC3-1"/>
    <property type="nucleotide sequence ID" value="NM_001083618.1"/>
</dbReference>
<dbReference type="RefSeq" id="NP_083340.2">
    <molecule id="A2APC3-2"/>
    <property type="nucleotide sequence ID" value="NM_029064.2"/>
</dbReference>
<dbReference type="SMR" id="A2APC3"/>
<dbReference type="FunCoup" id="A2APC3">
    <property type="interactions" value="164"/>
</dbReference>
<dbReference type="STRING" id="10090.ENSMUSP00000099444"/>
<dbReference type="PhosphoSitePlus" id="A2APC3"/>
<dbReference type="SwissPalm" id="A2APC3"/>
<dbReference type="PaxDb" id="10090-ENSMUSP00000099444"/>
<dbReference type="ProteomicsDB" id="298156">
    <molecule id="A2APC3-1"/>
</dbReference>
<dbReference type="ProteomicsDB" id="298157">
    <molecule id="A2APC3-2"/>
</dbReference>
<dbReference type="Antibodypedia" id="49885">
    <property type="antibodies" value="43 antibodies from 11 providers"/>
</dbReference>
<dbReference type="DNASU" id="74711"/>
<dbReference type="Ensembl" id="ENSMUST00000099197.9">
    <molecule id="A2APC3-1"/>
    <property type="protein sequence ID" value="ENSMUSP00000096803.3"/>
    <property type="gene ID" value="ENSMUSG00000074673.16"/>
</dbReference>
<dbReference type="Ensembl" id="ENSMUST00000103155.10">
    <molecule id="A2APC3-2"/>
    <property type="protein sequence ID" value="ENSMUSP00000099444.4"/>
    <property type="gene ID" value="ENSMUSG00000074673.16"/>
</dbReference>
<dbReference type="GeneID" id="74711"/>
<dbReference type="KEGG" id="mmu:74711"/>
<dbReference type="UCSC" id="uc008ngv.1">
    <molecule id="A2APC3-2"/>
    <property type="organism name" value="mouse"/>
</dbReference>
<dbReference type="UCSC" id="uc008ngx.1">
    <molecule id="A2APC3-1"/>
    <property type="organism name" value="mouse"/>
</dbReference>
<dbReference type="AGR" id="MGI:1913589"/>
<dbReference type="CTD" id="164395"/>
<dbReference type="MGI" id="MGI:1913589">
    <property type="gene designation" value="Ttll9"/>
</dbReference>
<dbReference type="VEuPathDB" id="HostDB:ENSMUSG00000074673"/>
<dbReference type="eggNOG" id="KOG2157">
    <property type="taxonomic scope" value="Eukaryota"/>
</dbReference>
<dbReference type="GeneTree" id="ENSGT00940000159879"/>
<dbReference type="HOGENOM" id="CLU_010131_0_1_1"/>
<dbReference type="InParanoid" id="A2APC3"/>
<dbReference type="OMA" id="NDITMHL"/>
<dbReference type="PhylomeDB" id="A2APC3"/>
<dbReference type="TreeFam" id="TF313087"/>
<dbReference type="Reactome" id="R-MMU-8955332">
    <property type="pathway name" value="Carboxyterminal post-translational modifications of tubulin"/>
</dbReference>
<dbReference type="BioGRID-ORCS" id="74711">
    <property type="hits" value="1 hit in 79 CRISPR screens"/>
</dbReference>
<dbReference type="ChiTaRS" id="Ttll9">
    <property type="organism name" value="mouse"/>
</dbReference>
<dbReference type="PRO" id="PR:A2APC3"/>
<dbReference type="Proteomes" id="UP000000589">
    <property type="component" value="Chromosome 2"/>
</dbReference>
<dbReference type="RNAct" id="A2APC3">
    <property type="molecule type" value="protein"/>
</dbReference>
<dbReference type="Bgee" id="ENSMUSG00000074673">
    <property type="expression patterns" value="Expressed in spermatid and 94 other cell types or tissues"/>
</dbReference>
<dbReference type="ExpressionAtlas" id="A2APC3">
    <property type="expression patterns" value="baseline and differential"/>
</dbReference>
<dbReference type="GO" id="GO:0036064">
    <property type="term" value="C:ciliary basal body"/>
    <property type="evidence" value="ECO:0000314"/>
    <property type="project" value="MGI"/>
</dbReference>
<dbReference type="GO" id="GO:0005737">
    <property type="term" value="C:cytoplasm"/>
    <property type="evidence" value="ECO:0007669"/>
    <property type="project" value="UniProtKB-KW"/>
</dbReference>
<dbReference type="GO" id="GO:0005874">
    <property type="term" value="C:microtubule"/>
    <property type="evidence" value="ECO:0007669"/>
    <property type="project" value="UniProtKB-KW"/>
</dbReference>
<dbReference type="GO" id="GO:0031514">
    <property type="term" value="C:motile cilium"/>
    <property type="evidence" value="ECO:0007669"/>
    <property type="project" value="UniProtKB-KW"/>
</dbReference>
<dbReference type="GO" id="GO:0005524">
    <property type="term" value="F:ATP binding"/>
    <property type="evidence" value="ECO:0007669"/>
    <property type="project" value="UniProtKB-KW"/>
</dbReference>
<dbReference type="GO" id="GO:0046872">
    <property type="term" value="F:metal ion binding"/>
    <property type="evidence" value="ECO:0007669"/>
    <property type="project" value="UniProtKB-KW"/>
</dbReference>
<dbReference type="GO" id="GO:0106438">
    <property type="term" value="F:protein-glutamic acid ligase activity, elongating"/>
    <property type="evidence" value="ECO:0007669"/>
    <property type="project" value="RHEA"/>
</dbReference>
<dbReference type="GO" id="GO:0070740">
    <property type="term" value="F:tubulin-glutamic acid ligase activity"/>
    <property type="evidence" value="ECO:0000314"/>
    <property type="project" value="UniProtKB"/>
</dbReference>
<dbReference type="GO" id="GO:0030317">
    <property type="term" value="P:flagellated sperm motility"/>
    <property type="evidence" value="ECO:0000315"/>
    <property type="project" value="MGI"/>
</dbReference>
<dbReference type="GO" id="GO:0036211">
    <property type="term" value="P:protein modification process"/>
    <property type="evidence" value="ECO:0007669"/>
    <property type="project" value="InterPro"/>
</dbReference>
<dbReference type="Gene3D" id="3.30.1490.20">
    <property type="entry name" value="ATP-grasp fold, A domain"/>
    <property type="match status" value="1"/>
</dbReference>
<dbReference type="Gene3D" id="3.30.470.20">
    <property type="entry name" value="ATP-grasp fold, B domain"/>
    <property type="match status" value="1"/>
</dbReference>
<dbReference type="InterPro" id="IPR013815">
    <property type="entry name" value="ATP_grasp_subdomain_1"/>
</dbReference>
<dbReference type="InterPro" id="IPR004344">
    <property type="entry name" value="TTL/TTLL_fam"/>
</dbReference>
<dbReference type="PANTHER" id="PTHR12241">
    <property type="entry name" value="TUBULIN POLYGLUTAMYLASE"/>
    <property type="match status" value="1"/>
</dbReference>
<dbReference type="PANTHER" id="PTHR12241:SF39">
    <property type="entry name" value="TUBULIN POLYGLUTAMYLASE TTLL9-RELATED"/>
    <property type="match status" value="1"/>
</dbReference>
<dbReference type="Pfam" id="PF03133">
    <property type="entry name" value="TTL"/>
    <property type="match status" value="1"/>
</dbReference>
<dbReference type="SUPFAM" id="SSF56059">
    <property type="entry name" value="Glutathione synthetase ATP-binding domain-like"/>
    <property type="match status" value="1"/>
</dbReference>
<dbReference type="PROSITE" id="PS51221">
    <property type="entry name" value="TTL"/>
    <property type="match status" value="1"/>
</dbReference>
<accession>A2APC3</accession>
<accession>A2APC4</accession>
<accession>A2APC5</accession>
<accession>A2APC6</accession>
<accession>Q9D570</accession>
<keyword id="KW-0025">Alternative splicing</keyword>
<keyword id="KW-0067">ATP-binding</keyword>
<keyword id="KW-0966">Cell projection</keyword>
<keyword id="KW-0969">Cilium</keyword>
<keyword id="KW-0963">Cytoplasm</keyword>
<keyword id="KW-0206">Cytoskeleton</keyword>
<keyword id="KW-0282">Flagellum</keyword>
<keyword id="KW-0436">Ligase</keyword>
<keyword id="KW-0460">Magnesium</keyword>
<keyword id="KW-0479">Metal-binding</keyword>
<keyword id="KW-0493">Microtubule</keyword>
<keyword id="KW-0547">Nucleotide-binding</keyword>
<keyword id="KW-1185">Reference proteome</keyword>
<reference key="1">
    <citation type="journal article" date="2007" name="Mol. Cell">
        <title>A targeted multienzyme mechanism for selective microtubule polyglutamylation.</title>
        <authorList>
            <person name="van Dijk J."/>
            <person name="Rogowski K."/>
            <person name="Miro J."/>
            <person name="Lacroix B."/>
            <person name="Edde B."/>
            <person name="Janke C."/>
        </authorList>
    </citation>
    <scope>NUCLEOTIDE SEQUENCE [MRNA] (ISOFORM 1)</scope>
    <scope>FUNCTION</scope>
    <scope>SUBCELLULAR LOCATION</scope>
    <scope>TISSUE SPECIFICITY</scope>
    <source>
        <strain>C57BL/6J</strain>
        <tissue>Testis</tissue>
    </source>
</reference>
<reference key="2">
    <citation type="journal article" date="2005" name="Science">
        <title>The transcriptional landscape of the mammalian genome.</title>
        <authorList>
            <person name="Carninci P."/>
            <person name="Kasukawa T."/>
            <person name="Katayama S."/>
            <person name="Gough J."/>
            <person name="Frith M.C."/>
            <person name="Maeda N."/>
            <person name="Oyama R."/>
            <person name="Ravasi T."/>
            <person name="Lenhard B."/>
            <person name="Wells C."/>
            <person name="Kodzius R."/>
            <person name="Shimokawa K."/>
            <person name="Bajic V.B."/>
            <person name="Brenner S.E."/>
            <person name="Batalov S."/>
            <person name="Forrest A.R."/>
            <person name="Zavolan M."/>
            <person name="Davis M.J."/>
            <person name="Wilming L.G."/>
            <person name="Aidinis V."/>
            <person name="Allen J.E."/>
            <person name="Ambesi-Impiombato A."/>
            <person name="Apweiler R."/>
            <person name="Aturaliya R.N."/>
            <person name="Bailey T.L."/>
            <person name="Bansal M."/>
            <person name="Baxter L."/>
            <person name="Beisel K.W."/>
            <person name="Bersano T."/>
            <person name="Bono H."/>
            <person name="Chalk A.M."/>
            <person name="Chiu K.P."/>
            <person name="Choudhary V."/>
            <person name="Christoffels A."/>
            <person name="Clutterbuck D.R."/>
            <person name="Crowe M.L."/>
            <person name="Dalla E."/>
            <person name="Dalrymple B.P."/>
            <person name="de Bono B."/>
            <person name="Della Gatta G."/>
            <person name="di Bernardo D."/>
            <person name="Down T."/>
            <person name="Engstrom P."/>
            <person name="Fagiolini M."/>
            <person name="Faulkner G."/>
            <person name="Fletcher C.F."/>
            <person name="Fukushima T."/>
            <person name="Furuno M."/>
            <person name="Futaki S."/>
            <person name="Gariboldi M."/>
            <person name="Georgii-Hemming P."/>
            <person name="Gingeras T.R."/>
            <person name="Gojobori T."/>
            <person name="Green R.E."/>
            <person name="Gustincich S."/>
            <person name="Harbers M."/>
            <person name="Hayashi Y."/>
            <person name="Hensch T.K."/>
            <person name="Hirokawa N."/>
            <person name="Hill D."/>
            <person name="Huminiecki L."/>
            <person name="Iacono M."/>
            <person name="Ikeo K."/>
            <person name="Iwama A."/>
            <person name="Ishikawa T."/>
            <person name="Jakt M."/>
            <person name="Kanapin A."/>
            <person name="Katoh M."/>
            <person name="Kawasawa Y."/>
            <person name="Kelso J."/>
            <person name="Kitamura H."/>
            <person name="Kitano H."/>
            <person name="Kollias G."/>
            <person name="Krishnan S.P."/>
            <person name="Kruger A."/>
            <person name="Kummerfeld S.K."/>
            <person name="Kurochkin I.V."/>
            <person name="Lareau L.F."/>
            <person name="Lazarevic D."/>
            <person name="Lipovich L."/>
            <person name="Liu J."/>
            <person name="Liuni S."/>
            <person name="McWilliam S."/>
            <person name="Madan Babu M."/>
            <person name="Madera M."/>
            <person name="Marchionni L."/>
            <person name="Matsuda H."/>
            <person name="Matsuzawa S."/>
            <person name="Miki H."/>
            <person name="Mignone F."/>
            <person name="Miyake S."/>
            <person name="Morris K."/>
            <person name="Mottagui-Tabar S."/>
            <person name="Mulder N."/>
            <person name="Nakano N."/>
            <person name="Nakauchi H."/>
            <person name="Ng P."/>
            <person name="Nilsson R."/>
            <person name="Nishiguchi S."/>
            <person name="Nishikawa S."/>
            <person name="Nori F."/>
            <person name="Ohara O."/>
            <person name="Okazaki Y."/>
            <person name="Orlando V."/>
            <person name="Pang K.C."/>
            <person name="Pavan W.J."/>
            <person name="Pavesi G."/>
            <person name="Pesole G."/>
            <person name="Petrovsky N."/>
            <person name="Piazza S."/>
            <person name="Reed J."/>
            <person name="Reid J.F."/>
            <person name="Ring B.Z."/>
            <person name="Ringwald M."/>
            <person name="Rost B."/>
            <person name="Ruan Y."/>
            <person name="Salzberg S.L."/>
            <person name="Sandelin A."/>
            <person name="Schneider C."/>
            <person name="Schoenbach C."/>
            <person name="Sekiguchi K."/>
            <person name="Semple C.A."/>
            <person name="Seno S."/>
            <person name="Sessa L."/>
            <person name="Sheng Y."/>
            <person name="Shibata Y."/>
            <person name="Shimada H."/>
            <person name="Shimada K."/>
            <person name="Silva D."/>
            <person name="Sinclair B."/>
            <person name="Sperling S."/>
            <person name="Stupka E."/>
            <person name="Sugiura K."/>
            <person name="Sultana R."/>
            <person name="Takenaka Y."/>
            <person name="Taki K."/>
            <person name="Tammoja K."/>
            <person name="Tan S.L."/>
            <person name="Tang S."/>
            <person name="Taylor M.S."/>
            <person name="Tegner J."/>
            <person name="Teichmann S.A."/>
            <person name="Ueda H.R."/>
            <person name="van Nimwegen E."/>
            <person name="Verardo R."/>
            <person name="Wei C.L."/>
            <person name="Yagi K."/>
            <person name="Yamanishi H."/>
            <person name="Zabarovsky E."/>
            <person name="Zhu S."/>
            <person name="Zimmer A."/>
            <person name="Hide W."/>
            <person name="Bult C."/>
            <person name="Grimmond S.M."/>
            <person name="Teasdale R.D."/>
            <person name="Liu E.T."/>
            <person name="Brusic V."/>
            <person name="Quackenbush J."/>
            <person name="Wahlestedt C."/>
            <person name="Mattick J.S."/>
            <person name="Hume D.A."/>
            <person name="Kai C."/>
            <person name="Sasaki D."/>
            <person name="Tomaru Y."/>
            <person name="Fukuda S."/>
            <person name="Kanamori-Katayama M."/>
            <person name="Suzuki M."/>
            <person name="Aoki J."/>
            <person name="Arakawa T."/>
            <person name="Iida J."/>
            <person name="Imamura K."/>
            <person name="Itoh M."/>
            <person name="Kato T."/>
            <person name="Kawaji H."/>
            <person name="Kawagashira N."/>
            <person name="Kawashima T."/>
            <person name="Kojima M."/>
            <person name="Kondo S."/>
            <person name="Konno H."/>
            <person name="Nakano K."/>
            <person name="Ninomiya N."/>
            <person name="Nishio T."/>
            <person name="Okada M."/>
            <person name="Plessy C."/>
            <person name="Shibata K."/>
            <person name="Shiraki T."/>
            <person name="Suzuki S."/>
            <person name="Tagami M."/>
            <person name="Waki K."/>
            <person name="Watahiki A."/>
            <person name="Okamura-Oho Y."/>
            <person name="Suzuki H."/>
            <person name="Kawai J."/>
            <person name="Hayashizaki Y."/>
        </authorList>
    </citation>
    <scope>NUCLEOTIDE SEQUENCE [LARGE SCALE MRNA] (ISOFORM 2)</scope>
    <source>
        <strain>C57BL/6J</strain>
        <tissue>Testis</tissue>
    </source>
</reference>
<reference key="3">
    <citation type="journal article" date="2009" name="PLoS Biol.">
        <title>Lineage-specific biology revealed by a finished genome assembly of the mouse.</title>
        <authorList>
            <person name="Church D.M."/>
            <person name="Goodstadt L."/>
            <person name="Hillier L.W."/>
            <person name="Zody M.C."/>
            <person name="Goldstein S."/>
            <person name="She X."/>
            <person name="Bult C.J."/>
            <person name="Agarwala R."/>
            <person name="Cherry J.L."/>
            <person name="DiCuccio M."/>
            <person name="Hlavina W."/>
            <person name="Kapustin Y."/>
            <person name="Meric P."/>
            <person name="Maglott D."/>
            <person name="Birtle Z."/>
            <person name="Marques A.C."/>
            <person name="Graves T."/>
            <person name="Zhou S."/>
            <person name="Teague B."/>
            <person name="Potamousis K."/>
            <person name="Churas C."/>
            <person name="Place M."/>
            <person name="Herschleb J."/>
            <person name="Runnheim R."/>
            <person name="Forrest D."/>
            <person name="Amos-Landgraf J."/>
            <person name="Schwartz D.C."/>
            <person name="Cheng Z."/>
            <person name="Lindblad-Toh K."/>
            <person name="Eichler E.E."/>
            <person name="Ponting C.P."/>
        </authorList>
    </citation>
    <scope>NUCLEOTIDE SEQUENCE [LARGE SCALE GENOMIC DNA]</scope>
    <source>
        <strain>C57BL/6J</strain>
    </source>
</reference>
<reference key="4">
    <citation type="journal article" date="2013" name="J. Cell Biol.">
        <title>Tubulin glycylases and glutamylases have distinct functions in stabilization and motility of ependymal cilia.</title>
        <authorList>
            <person name="Bosch Grau M."/>
            <person name="Gonzalez Curto G."/>
            <person name="Rocha C."/>
            <person name="Magiera M.M."/>
            <person name="Marques Sousa P."/>
            <person name="Giordano T."/>
            <person name="Spassky N."/>
            <person name="Janke C."/>
        </authorList>
    </citation>
    <scope>TISSUE SPECIFICITY</scope>
</reference>
<reference key="5">
    <citation type="journal article" date="2016" name="J. Cell Sci.">
        <title>Ttll9-/- mice sperm flagella show shortening of doublet 7, reduction of doublet 5 polyglutamylation and a stall in beating.</title>
        <authorList>
            <person name="Konno A."/>
            <person name="Ikegami K."/>
            <person name="Konishi Y."/>
            <person name="Yang H.J."/>
            <person name="Abe M."/>
            <person name="Yamazaki M."/>
            <person name="Sakimura K."/>
            <person name="Yao I."/>
            <person name="Shiba K."/>
            <person name="Inaba K."/>
            <person name="Setou M."/>
        </authorList>
    </citation>
    <scope>FUNCTION</scope>
    <scope>CATALYTIC ACTIVITY</scope>
    <scope>TISSUE SPECIFICITY</scope>
    <scope>DISRUPTION PHENOTYPE</scope>
</reference>
<protein>
    <recommendedName>
        <fullName evidence="8">Probable tubulin polyglutamylase TTLL9</fullName>
        <ecNumber evidence="11">6.3.2.-</ecNumber>
    </recommendedName>
    <alternativeName>
        <fullName>Tubulin--tyrosine ligase-like protein 9</fullName>
    </alternativeName>
</protein>
<organism>
    <name type="scientific">Mus musculus</name>
    <name type="common">Mouse</name>
    <dbReference type="NCBI Taxonomy" id="10090"/>
    <lineage>
        <taxon>Eukaryota</taxon>
        <taxon>Metazoa</taxon>
        <taxon>Chordata</taxon>
        <taxon>Craniata</taxon>
        <taxon>Vertebrata</taxon>
        <taxon>Euteleostomi</taxon>
        <taxon>Mammalia</taxon>
        <taxon>Eutheria</taxon>
        <taxon>Euarchontoglires</taxon>
        <taxon>Glires</taxon>
        <taxon>Rodentia</taxon>
        <taxon>Myomorpha</taxon>
        <taxon>Muroidea</taxon>
        <taxon>Muridae</taxon>
        <taxon>Murinae</taxon>
        <taxon>Mus</taxon>
        <taxon>Mus</taxon>
    </lineage>
</organism>
<name>TTLL9_MOUSE</name>
<sequence length="461" mass="54107">MSRQKNQNSKGHGVSKGKEREQRTLIRFKTTLMNTLMDVLRHRPGWVEVKDEGEWDFYWCDVSWLRENFDHTYMDEHVRISHFRNHYELTRKNYMVKNLKRFRKYLERESGKTEAAKCDFFPKTFEMPCEYHLFVEEFRKNPGITWIMKPVARSQGKGIFLFRRLKDIMDWRKGTSGKKPTGVETQPARANMNPSGSHDTRSSDDQKDDLPVENYVAQRYVENPYLIGGRKFDLRVYVLVMSYIPLRAWLYRDGFARFSNTRFTLNSIDDHYVHLTNVAVQKTSPDYHLKKGCKWMLQRFRQYLASKHGPKAVETLFSDMDNIFIKSLQSVQKVIISDKHCFELYGYDILIDQDLKPWLLEVNASPSLTASSQEDYELKTCLLEDTLHVVDMEARLTGKEKRVGGFDLMWNDGPVSREDGPSDLSGMGNFVTNTHLGCVNDRKEQLRQLFRSLQAQRKAPS</sequence>
<gene>
    <name evidence="12" type="primary">Ttll9</name>
</gene>
<comment type="function">
    <text evidence="6 10">Probable tubulin polyglutamylase that generates side chains of glutamate on the gamma-carboxyl group of specific glutamate residues within the C-terminal tail of target proteins (PubMed:27257088). Similar to TTLL1, may acquire enzymatic activity only in complex with other proteins as it is most likely lacking domains important for autonomous activity (Probable). Mediates tubulin polyglutamylation which induces establishment of microtubule heterogeneity in sperm flagella, thereby playing a role in normal motile flagella axoneme structure and sperm flagella beating pattern (PubMed:27257088).</text>
</comment>
<comment type="catalytic activity">
    <reaction evidence="11">
        <text>(L-glutamyl)(n)-gamma-L-glutamyl-L-glutamyl-[protein] + L-glutamate + ATP = (L-glutamyl)(n+1)-gamma-L-glutamyl-L-glutamyl-[protein] + ADP + phosphate + H(+)</text>
        <dbReference type="Rhea" id="RHEA:60148"/>
        <dbReference type="Rhea" id="RHEA-COMP:15519"/>
        <dbReference type="Rhea" id="RHEA-COMP:15675"/>
        <dbReference type="ChEBI" id="CHEBI:15378"/>
        <dbReference type="ChEBI" id="CHEBI:29985"/>
        <dbReference type="ChEBI" id="CHEBI:30616"/>
        <dbReference type="ChEBI" id="CHEBI:43474"/>
        <dbReference type="ChEBI" id="CHEBI:143623"/>
        <dbReference type="ChEBI" id="CHEBI:456216"/>
    </reaction>
    <physiologicalReaction direction="left-to-right" evidence="11">
        <dbReference type="Rhea" id="RHEA:60149"/>
    </physiologicalReaction>
</comment>
<comment type="cofactor">
    <cofactor evidence="1">
        <name>Mg(2+)</name>
        <dbReference type="ChEBI" id="CHEBI:18420"/>
    </cofactor>
</comment>
<comment type="subcellular location">
    <subcellularLocation>
        <location evidence="4">Cytoplasm</location>
        <location evidence="4">Cytoskeleton</location>
        <location evidence="4">Cilium basal body</location>
    </subcellularLocation>
    <subcellularLocation>
        <location evidence="4">Cytoplasm</location>
        <location evidence="4">Cytoskeleton</location>
    </subcellularLocation>
    <subcellularLocation>
        <location evidence="11">Cytoplasm</location>
        <location evidence="11">Cytoskeleton</location>
        <location evidence="11">Flagellum axoneme</location>
    </subcellularLocation>
</comment>
<comment type="alternative products">
    <event type="alternative splicing"/>
    <isoform>
        <id>A2APC3-1</id>
        <name>1</name>
        <sequence type="displayed"/>
    </isoform>
    <isoform>
        <id>A2APC3-2</id>
        <name>2</name>
        <sequence type="described" ref="VSP_032261"/>
    </isoform>
</comment>
<comment type="tissue specificity">
    <text evidence="4 5 6">Highly expressed in brain and testis (PubMed:17499049). Expressed in heart, kidney and lung (PubMed:17499049). In the brain, expressed in ependymal cilia, cortex, corpus callosum and striatum (PubMed:23897886). In the testis, specifically expressed in the seminiferous tubules (PubMed:27257088).</text>
</comment>
<comment type="domain">
    <text evidence="1">Gln-155 is the main determinant for regioselectivity, which segregates between initiases and elongases in all tubulin--tyrosine ligase family. A glutamine residue at this position is found in elongases TTLL6, TTLL9, TTLL11, TTLL13, TTLL10 and favors glutamate-chain elongation, whereas an arginine residue is found in initiases TTLL2, TTLL4, TTLL5, TTLL3, TTLL8 and favors initiation.</text>
</comment>
<comment type="disruption phenotype">
    <text evidence="6">Males are infertile due to a reduction in sperm count and defective sperm motility. Sperm axonemes have shortened microtubule doublet 7 and reduced tubulin polyglutamylation, in particular of doublet 5. Reduced sperm motility is caused by frequent stalls of flagella due to defective switching in the bending direction.</text>
</comment>
<comment type="similarity">
    <text evidence="9">Belongs to the tubulin--tyrosine ligase family.</text>
</comment>
<comment type="sequence caution" evidence="9">
    <conflict type="erroneous gene model prediction">
        <sequence resource="EMBL-CDS" id="CAM23684"/>
    </conflict>
</comment>
<comment type="sequence caution" evidence="9">
    <conflict type="erroneous gene model prediction">
        <sequence resource="EMBL-CDS" id="CAM23685"/>
    </conflict>
</comment>